<name>SRG7_CAEEL</name>
<dbReference type="EMBL" id="FO080617">
    <property type="protein sequence ID" value="CCD65206.1"/>
    <property type="molecule type" value="Genomic_DNA"/>
</dbReference>
<dbReference type="PIR" id="T15560">
    <property type="entry name" value="T15560"/>
</dbReference>
<dbReference type="RefSeq" id="NP_498371.1">
    <property type="nucleotide sequence ID" value="NM_065970.2"/>
</dbReference>
<dbReference type="SMR" id="P54129"/>
<dbReference type="FunCoup" id="P54129">
    <property type="interactions" value="3"/>
</dbReference>
<dbReference type="PaxDb" id="6239-C18F10.8"/>
<dbReference type="EnsemblMetazoa" id="C18F10.8.1">
    <property type="protein sequence ID" value="C18F10.8.1"/>
    <property type="gene ID" value="WBGene00005165"/>
</dbReference>
<dbReference type="GeneID" id="191833"/>
<dbReference type="KEGG" id="cel:CELE_C18F10.8"/>
<dbReference type="UCSC" id="C18F10.8">
    <property type="organism name" value="c. elegans"/>
</dbReference>
<dbReference type="AGR" id="WB:WBGene00005165"/>
<dbReference type="CTD" id="191833"/>
<dbReference type="WormBase" id="C18F10.8">
    <property type="protein sequence ID" value="CE06858"/>
    <property type="gene ID" value="WBGene00005165"/>
    <property type="gene designation" value="srg-7"/>
</dbReference>
<dbReference type="eggNOG" id="ENOG502TGR3">
    <property type="taxonomic scope" value="Eukaryota"/>
</dbReference>
<dbReference type="GeneTree" id="ENSGT00970000195841"/>
<dbReference type="HOGENOM" id="CLU_061253_1_0_1"/>
<dbReference type="InParanoid" id="P54129"/>
<dbReference type="OMA" id="KEVVFWY"/>
<dbReference type="OrthoDB" id="5872429at2759"/>
<dbReference type="PhylomeDB" id="P54129"/>
<dbReference type="PRO" id="PR:P54129"/>
<dbReference type="Proteomes" id="UP000001940">
    <property type="component" value="Chromosome III"/>
</dbReference>
<dbReference type="Bgee" id="WBGene00005165">
    <property type="expression patterns" value="Expressed in pharyngeal muscle cell (C elegans) and 1 other cell type or tissue"/>
</dbReference>
<dbReference type="GO" id="GO:0016020">
    <property type="term" value="C:membrane"/>
    <property type="evidence" value="ECO:0007669"/>
    <property type="project" value="UniProtKB-SubCell"/>
</dbReference>
<dbReference type="GO" id="GO:0004888">
    <property type="term" value="F:transmembrane signaling receptor activity"/>
    <property type="evidence" value="ECO:0007669"/>
    <property type="project" value="InterPro"/>
</dbReference>
<dbReference type="GO" id="GO:0007606">
    <property type="term" value="P:sensory perception of chemical stimulus"/>
    <property type="evidence" value="ECO:0007669"/>
    <property type="project" value="InterPro"/>
</dbReference>
<dbReference type="InterPro" id="IPR000609">
    <property type="entry name" value="7TM_GPCR_serpentine_rcpt_Srg"/>
</dbReference>
<dbReference type="InterPro" id="IPR051119">
    <property type="entry name" value="Nematode_SR-like"/>
</dbReference>
<dbReference type="PANTHER" id="PTHR31627:SF7">
    <property type="entry name" value="SERPENTINE RECEPTOR CLASS GAMMA-7"/>
    <property type="match status" value="1"/>
</dbReference>
<dbReference type="PANTHER" id="PTHR31627">
    <property type="entry name" value="SERPENTINE RECEPTOR CLASS GAMMA-RELATED"/>
    <property type="match status" value="1"/>
</dbReference>
<dbReference type="Pfam" id="PF02118">
    <property type="entry name" value="Srg"/>
    <property type="match status" value="1"/>
</dbReference>
<dbReference type="PRINTS" id="PR00698">
    <property type="entry name" value="TMPROTEINSRG"/>
</dbReference>
<reference key="1">
    <citation type="journal article" date="1998" name="Science">
        <title>Genome sequence of the nematode C. elegans: a platform for investigating biology.</title>
        <authorList>
            <consortium name="The C. elegans sequencing consortium"/>
        </authorList>
    </citation>
    <scope>NUCLEOTIDE SEQUENCE [LARGE SCALE GENOMIC DNA]</scope>
    <source>
        <strain>Bristol N2</strain>
    </source>
</reference>
<evidence type="ECO:0000255" key="1"/>
<evidence type="ECO:0000256" key="2">
    <source>
        <dbReference type="SAM" id="MobiDB-lite"/>
    </source>
</evidence>
<evidence type="ECO:0000305" key="3"/>
<proteinExistence type="inferred from homology"/>
<keyword id="KW-0472">Membrane</keyword>
<keyword id="KW-1185">Reference proteome</keyword>
<keyword id="KW-0812">Transmembrane</keyword>
<keyword id="KW-1133">Transmembrane helix</keyword>
<feature type="chain" id="PRO_0000104557" description="Serpentine receptor class gamma-7">
    <location>
        <begin position="1"/>
        <end position="339"/>
    </location>
</feature>
<feature type="transmembrane region" description="Helical" evidence="1">
    <location>
        <begin position="30"/>
        <end position="50"/>
    </location>
</feature>
<feature type="transmembrane region" description="Helical" evidence="1">
    <location>
        <begin position="65"/>
        <end position="85"/>
    </location>
</feature>
<feature type="transmembrane region" description="Helical" evidence="1">
    <location>
        <begin position="98"/>
        <end position="118"/>
    </location>
</feature>
<feature type="transmembrane region" description="Helical" evidence="1">
    <location>
        <begin position="152"/>
        <end position="172"/>
    </location>
</feature>
<feature type="transmembrane region" description="Helical" evidence="1">
    <location>
        <begin position="200"/>
        <end position="220"/>
    </location>
</feature>
<feature type="transmembrane region" description="Helical" evidence="1">
    <location>
        <begin position="239"/>
        <end position="259"/>
    </location>
</feature>
<feature type="transmembrane region" description="Helical" evidence="1">
    <location>
        <begin position="268"/>
        <end position="288"/>
    </location>
</feature>
<feature type="region of interest" description="Disordered" evidence="2">
    <location>
        <begin position="319"/>
        <end position="339"/>
    </location>
</feature>
<gene>
    <name type="primary">srg-7</name>
    <name type="ORF">C18F10.8</name>
</gene>
<organism>
    <name type="scientific">Caenorhabditis elegans</name>
    <dbReference type="NCBI Taxonomy" id="6239"/>
    <lineage>
        <taxon>Eukaryota</taxon>
        <taxon>Metazoa</taxon>
        <taxon>Ecdysozoa</taxon>
        <taxon>Nematoda</taxon>
        <taxon>Chromadorea</taxon>
        <taxon>Rhabditida</taxon>
        <taxon>Rhabditina</taxon>
        <taxon>Rhabditomorpha</taxon>
        <taxon>Rhabditoidea</taxon>
        <taxon>Rhabditidae</taxon>
        <taxon>Peloderinae</taxon>
        <taxon>Caenorhabditis</taxon>
    </lineage>
</organism>
<sequence>MASSPPIYNLEQYGTNCSEEYSNFYENSKYWIQCLWLIPTLFLLVWIIITTRVRYPSQYSNLPYWILTADCVVSIILILLDLFVVRLFLYFPQLCSKFSTIFINYPIISDIYFPIYNYARVFKTGSQCGMILSRLFCVLIPFGHDEKLRRHIPLFLTIICILPILVVWNTVISEKEVVFWYGGFFVIYHRRVGWVSLSKLHLTFIFVSISFILISSLLLMRHLPIESAVNAERRVITNSIFIIVAFFFQAAFQSFYAFFRYTDWYPRFLVDFQFIIYDVMTVGYPLIFLNFAKEFRNHVFLKSNRKGRTLMELRSMSKPFNNTMPRQESPSPNYDSILA</sequence>
<comment type="subcellular location">
    <subcellularLocation>
        <location evidence="3">Membrane</location>
        <topology evidence="3">Multi-pass membrane protein</topology>
    </subcellularLocation>
</comment>
<comment type="similarity">
    <text evidence="3">Belongs to the nematode receptor-like protein srg family.</text>
</comment>
<protein>
    <recommendedName>
        <fullName>Serpentine receptor class gamma-7</fullName>
        <shortName>Protein srg-7</shortName>
    </recommendedName>
</protein>
<accession>P54129</accession>